<accession>Q13503</accession>
<accession>B2R4I3</accession>
<accession>Q6IB05</accession>
<accession>Q92811</accession>
<sequence>MADRLTQLQDAVNSLADQFCNAIGVLQQCGPPASFNNIQTAINKDQPANPTEEYAQLFAALIARTAKDIDVLIDSLPSEESTAALQAASLYKLEEENHEAATCLEDVVYRGDMLLEKIQSALADIAQSQLKTRSGTHSQSLPDS</sequence>
<name>MED21_HUMAN</name>
<reference key="1">
    <citation type="journal article" date="1996" name="Nature">
        <title>A mammalian SRB protein associated with an RNA polymerase II holoenzyme.</title>
        <authorList>
            <person name="Chao D.M."/>
            <person name="Gadbois E.L."/>
            <person name="Murray P.J."/>
            <person name="Anderson S.F."/>
            <person name="Sonu M.S."/>
            <person name="Parvin J.D."/>
            <person name="Young R.A."/>
        </authorList>
    </citation>
    <scope>NUCLEOTIDE SEQUENCE [MRNA]</scope>
    <scope>INTERACTION WITH RNA POLYMERASE II</scope>
</reference>
<reference key="2">
    <citation type="journal article" date="1996" name="Nature">
        <title>A human RNA polymerase II complex associated with SRB and DNA-repair proteins.</title>
        <authorList>
            <person name="Maldonado E."/>
            <person name="Shiekhattar R."/>
            <person name="Sheldon M."/>
            <person name="Cho H."/>
            <person name="Drapkin R."/>
            <person name="Rickert P."/>
            <person name="Lees E."/>
            <person name="Anderson C.W."/>
            <person name="Linn S."/>
            <person name="Reinberg D."/>
        </authorList>
    </citation>
    <scope>NUCLEOTIDE SEQUENCE [MRNA]</scope>
    <scope>INTERACTION WITH RNA POLYMERASE II</scope>
    <source>
        <tissue>Liver</tissue>
    </source>
</reference>
<reference key="3">
    <citation type="journal article" date="1996" name="Nature">
        <authorList>
            <person name="Maldonado E."/>
            <person name="Shiekhattar R."/>
            <person name="Sheldon M."/>
            <person name="Cho H."/>
            <person name="Drapkin R."/>
            <person name="Rickert P."/>
            <person name="Lees E."/>
            <person name="Anderson C.W."/>
            <person name="Linn S."/>
            <person name="Reinberg D."/>
        </authorList>
    </citation>
    <scope>ERRATUM OF PUBMED:8609996</scope>
</reference>
<reference key="4">
    <citation type="submission" date="2004-06" db="EMBL/GenBank/DDBJ databases">
        <title>Cloning of human full open reading frames in Gateway(TM) system entry vector (pDONR201).</title>
        <authorList>
            <person name="Ebert L."/>
            <person name="Schick M."/>
            <person name="Neubert P."/>
            <person name="Schatten R."/>
            <person name="Henze S."/>
            <person name="Korn B."/>
        </authorList>
    </citation>
    <scope>NUCLEOTIDE SEQUENCE [LARGE SCALE MRNA]</scope>
</reference>
<reference key="5">
    <citation type="journal article" date="2004" name="Nat. Genet.">
        <title>Complete sequencing and characterization of 21,243 full-length human cDNAs.</title>
        <authorList>
            <person name="Ota T."/>
            <person name="Suzuki Y."/>
            <person name="Nishikawa T."/>
            <person name="Otsuki T."/>
            <person name="Sugiyama T."/>
            <person name="Irie R."/>
            <person name="Wakamatsu A."/>
            <person name="Hayashi K."/>
            <person name="Sato H."/>
            <person name="Nagai K."/>
            <person name="Kimura K."/>
            <person name="Makita H."/>
            <person name="Sekine M."/>
            <person name="Obayashi M."/>
            <person name="Nishi T."/>
            <person name="Shibahara T."/>
            <person name="Tanaka T."/>
            <person name="Ishii S."/>
            <person name="Yamamoto J."/>
            <person name="Saito K."/>
            <person name="Kawai Y."/>
            <person name="Isono Y."/>
            <person name="Nakamura Y."/>
            <person name="Nagahari K."/>
            <person name="Murakami K."/>
            <person name="Yasuda T."/>
            <person name="Iwayanagi T."/>
            <person name="Wagatsuma M."/>
            <person name="Shiratori A."/>
            <person name="Sudo H."/>
            <person name="Hosoiri T."/>
            <person name="Kaku Y."/>
            <person name="Kodaira H."/>
            <person name="Kondo H."/>
            <person name="Sugawara M."/>
            <person name="Takahashi M."/>
            <person name="Kanda K."/>
            <person name="Yokoi T."/>
            <person name="Furuya T."/>
            <person name="Kikkawa E."/>
            <person name="Omura Y."/>
            <person name="Abe K."/>
            <person name="Kamihara K."/>
            <person name="Katsuta N."/>
            <person name="Sato K."/>
            <person name="Tanikawa M."/>
            <person name="Yamazaki M."/>
            <person name="Ninomiya K."/>
            <person name="Ishibashi T."/>
            <person name="Yamashita H."/>
            <person name="Murakawa K."/>
            <person name="Fujimori K."/>
            <person name="Tanai H."/>
            <person name="Kimata M."/>
            <person name="Watanabe M."/>
            <person name="Hiraoka S."/>
            <person name="Chiba Y."/>
            <person name="Ishida S."/>
            <person name="Ono Y."/>
            <person name="Takiguchi S."/>
            <person name="Watanabe S."/>
            <person name="Yosida M."/>
            <person name="Hotuta T."/>
            <person name="Kusano J."/>
            <person name="Kanehori K."/>
            <person name="Takahashi-Fujii A."/>
            <person name="Hara H."/>
            <person name="Tanase T.-O."/>
            <person name="Nomura Y."/>
            <person name="Togiya S."/>
            <person name="Komai F."/>
            <person name="Hara R."/>
            <person name="Takeuchi K."/>
            <person name="Arita M."/>
            <person name="Imose N."/>
            <person name="Musashino K."/>
            <person name="Yuuki H."/>
            <person name="Oshima A."/>
            <person name="Sasaki N."/>
            <person name="Aotsuka S."/>
            <person name="Yoshikawa Y."/>
            <person name="Matsunawa H."/>
            <person name="Ichihara T."/>
            <person name="Shiohata N."/>
            <person name="Sano S."/>
            <person name="Moriya S."/>
            <person name="Momiyama H."/>
            <person name="Satoh N."/>
            <person name="Takami S."/>
            <person name="Terashima Y."/>
            <person name="Suzuki O."/>
            <person name="Nakagawa S."/>
            <person name="Senoh A."/>
            <person name="Mizoguchi H."/>
            <person name="Goto Y."/>
            <person name="Shimizu F."/>
            <person name="Wakebe H."/>
            <person name="Hishigaki H."/>
            <person name="Watanabe T."/>
            <person name="Sugiyama A."/>
            <person name="Takemoto M."/>
            <person name="Kawakami B."/>
            <person name="Yamazaki M."/>
            <person name="Watanabe K."/>
            <person name="Kumagai A."/>
            <person name="Itakura S."/>
            <person name="Fukuzumi Y."/>
            <person name="Fujimori Y."/>
            <person name="Komiyama M."/>
            <person name="Tashiro H."/>
            <person name="Tanigami A."/>
            <person name="Fujiwara T."/>
            <person name="Ono T."/>
            <person name="Yamada K."/>
            <person name="Fujii Y."/>
            <person name="Ozaki K."/>
            <person name="Hirao M."/>
            <person name="Ohmori Y."/>
            <person name="Kawabata A."/>
            <person name="Hikiji T."/>
            <person name="Kobatake N."/>
            <person name="Inagaki H."/>
            <person name="Ikema Y."/>
            <person name="Okamoto S."/>
            <person name="Okitani R."/>
            <person name="Kawakami T."/>
            <person name="Noguchi S."/>
            <person name="Itoh T."/>
            <person name="Shigeta K."/>
            <person name="Senba T."/>
            <person name="Matsumura K."/>
            <person name="Nakajima Y."/>
            <person name="Mizuno T."/>
            <person name="Morinaga M."/>
            <person name="Sasaki M."/>
            <person name="Togashi T."/>
            <person name="Oyama M."/>
            <person name="Hata H."/>
            <person name="Watanabe M."/>
            <person name="Komatsu T."/>
            <person name="Mizushima-Sugano J."/>
            <person name="Satoh T."/>
            <person name="Shirai Y."/>
            <person name="Takahashi Y."/>
            <person name="Nakagawa K."/>
            <person name="Okumura K."/>
            <person name="Nagase T."/>
            <person name="Nomura N."/>
            <person name="Kikuchi H."/>
            <person name="Masuho Y."/>
            <person name="Yamashita R."/>
            <person name="Nakai K."/>
            <person name="Yada T."/>
            <person name="Nakamura Y."/>
            <person name="Ohara O."/>
            <person name="Isogai T."/>
            <person name="Sugano S."/>
        </authorList>
    </citation>
    <scope>NUCLEOTIDE SEQUENCE [LARGE SCALE MRNA]</scope>
    <source>
        <tissue>Brain cortex</tissue>
    </source>
</reference>
<reference key="6">
    <citation type="submission" date="2005-07" db="EMBL/GenBank/DDBJ databases">
        <authorList>
            <person name="Mural R.J."/>
            <person name="Istrail S."/>
            <person name="Sutton G.G."/>
            <person name="Florea L."/>
            <person name="Halpern A.L."/>
            <person name="Mobarry C.M."/>
            <person name="Lippert R."/>
            <person name="Walenz B."/>
            <person name="Shatkay H."/>
            <person name="Dew I."/>
            <person name="Miller J.R."/>
            <person name="Flanigan M.J."/>
            <person name="Edwards N.J."/>
            <person name="Bolanos R."/>
            <person name="Fasulo D."/>
            <person name="Halldorsson B.V."/>
            <person name="Hannenhalli S."/>
            <person name="Turner R."/>
            <person name="Yooseph S."/>
            <person name="Lu F."/>
            <person name="Nusskern D.R."/>
            <person name="Shue B.C."/>
            <person name="Zheng X.H."/>
            <person name="Zhong F."/>
            <person name="Delcher A.L."/>
            <person name="Huson D.H."/>
            <person name="Kravitz S.A."/>
            <person name="Mouchard L."/>
            <person name="Reinert K."/>
            <person name="Remington K.A."/>
            <person name="Clark A.G."/>
            <person name="Waterman M.S."/>
            <person name="Eichler E.E."/>
            <person name="Adams M.D."/>
            <person name="Hunkapiller M.W."/>
            <person name="Myers E.W."/>
            <person name="Venter J.C."/>
        </authorList>
    </citation>
    <scope>NUCLEOTIDE SEQUENCE [LARGE SCALE GENOMIC DNA]</scope>
</reference>
<reference key="7">
    <citation type="journal article" date="2004" name="Genome Res.">
        <title>The status, quality, and expansion of the NIH full-length cDNA project: the Mammalian Gene Collection (MGC).</title>
        <authorList>
            <consortium name="The MGC Project Team"/>
        </authorList>
    </citation>
    <scope>NUCLEOTIDE SEQUENCE [LARGE SCALE MRNA]</scope>
    <source>
        <tissue>Kidney</tissue>
    </source>
</reference>
<reference key="8">
    <citation type="journal article" date="1998" name="Mol. Cell">
        <title>Transcription activation via enhanced preinitiation complex assembly in a human cell-free system lacking TAFIIs.</title>
        <authorList>
            <person name="Oelgeschlaeger T."/>
            <person name="Tao Y."/>
            <person name="Kang Y.K."/>
            <person name="Roeder R.G."/>
        </authorList>
    </citation>
    <scope>FUNCTION</scope>
</reference>
<reference key="9">
    <citation type="journal article" date="1998" name="Mol. Cell">
        <title>NAT, a human complex containing Srb polypeptides that functions as a negative regulator of activated transcription.</title>
        <authorList>
            <person name="Sun X."/>
            <person name="Zhang Y."/>
            <person name="Cho H."/>
            <person name="Rickert P."/>
            <person name="Lees E."/>
            <person name="Lane W.S."/>
            <person name="Reinberg D."/>
        </authorList>
    </citation>
    <scope>IDENTIFICATION BY MASS SPECTROMETRY</scope>
    <scope>IDENTIFICATION IN A FORM OF THE MEDIATOR COMPLEX</scope>
</reference>
<reference key="10">
    <citation type="journal article" date="1999" name="J. Biol. Chem.">
        <title>The human homologue of Drosophila TRF-proximal protein is associated with an RNA polymerase II-SRB complex.</title>
        <authorList>
            <person name="Xiao H."/>
            <person name="Tao Y."/>
            <person name="Roeder R.G."/>
        </authorList>
    </citation>
    <scope>INTERACTION WITH RNA POLYMERASE II AND MED21</scope>
</reference>
<reference key="11">
    <citation type="journal article" date="1999" name="Mol. Cell">
        <title>A novel human SRB/MED-containing cofactor complex, SMCC, involved in transcription regulation.</title>
        <authorList>
            <person name="Gu W."/>
            <person name="Malik S."/>
            <person name="Ito M."/>
            <person name="Yuan C.-X."/>
            <person name="Fondell J.D."/>
            <person name="Zhang X."/>
            <person name="Martinez E."/>
            <person name="Qin J."/>
            <person name="Roeder R.G."/>
        </authorList>
    </citation>
    <scope>IDENTIFICATION BY MASS SPECTROMETRY</scope>
    <scope>IDENTIFICATION IN THE SMCC COMPLEX</scope>
</reference>
<reference key="12">
    <citation type="journal article" date="1999" name="Mol. Cell">
        <authorList>
            <person name="Gu W."/>
            <person name="Malik S."/>
            <person name="Ito M."/>
            <person name="Yuan C.-X."/>
            <person name="Fondell J.D."/>
            <person name="Zhang X."/>
            <person name="Martinez E."/>
            <person name="Qin J."/>
            <person name="Roeder R.G."/>
        </authorList>
    </citation>
    <scope>ERRATUM OF PUBMED:10024883</scope>
</reference>
<reference key="13">
    <citation type="journal article" date="2004" name="Mol. Cell">
        <title>A set of consensus mammalian mediator subunits identified by multidimensional protein identification technology.</title>
        <authorList>
            <person name="Sato S."/>
            <person name="Tomomori-Sato C."/>
            <person name="Parmely T.J."/>
            <person name="Florens L."/>
            <person name="Zybailov B."/>
            <person name="Swanson S.K."/>
            <person name="Banks C.A.S."/>
            <person name="Jin J."/>
            <person name="Cai Y."/>
            <person name="Washburn M.P."/>
            <person name="Conaway J.W."/>
            <person name="Conaway R.C."/>
        </authorList>
    </citation>
    <scope>IDENTIFICATION BY MASS SPECTROMETRY</scope>
    <scope>IDENTIFICATION IN THE MEDIATOR COMPLEX</scope>
</reference>
<reference key="14">
    <citation type="journal article" date="2004" name="Mol. Cell. Endocrinol.">
        <title>hSrb7, an essential human Mediator component, acts as a coactivator for the thyroid hormone receptor.</title>
        <authorList>
            <person name="Nevado J."/>
            <person name="Tenbaum S.P."/>
            <person name="Aranda A."/>
        </authorList>
    </citation>
    <scope>FUNCTION</scope>
    <scope>INTERACTION WITH THRA</scope>
</reference>
<reference key="15">
    <citation type="journal article" date="2005" name="Mol. Cell">
        <title>MED1/TRAP220 exists predominantly in a TRAP/Mediator subpopulation enriched in RNA polymerase II and is required for ER-mediated transcription.</title>
        <authorList>
            <person name="Zhang X."/>
            <person name="Krutchinsky A."/>
            <person name="Fukuda A."/>
            <person name="Chen W."/>
            <person name="Yamamura S."/>
            <person name="Chait B.T."/>
            <person name="Roeder R.G."/>
        </authorList>
    </citation>
    <scope>INTERACTION WITH MED1; MED6; MED12; MED13; MED16; MED17; MED18; MED20; MED24; MED28 AND MED30</scope>
    <scope>IDENTIFICATION BY MASS SPECTROMETRY</scope>
    <scope>IDENTIFICATION IN THE MEDIATOR COMPLEX</scope>
    <scope>ASSOCIATION OF THE MEDIATOR COMPLEX WITH RNA POLYMERASE II</scope>
</reference>
<keyword id="KW-0002">3D-structure</keyword>
<keyword id="KW-0010">Activator</keyword>
<keyword id="KW-0539">Nucleus</keyword>
<keyword id="KW-1267">Proteomics identification</keyword>
<keyword id="KW-1185">Reference proteome</keyword>
<keyword id="KW-0804">Transcription</keyword>
<keyword id="KW-0805">Transcription regulation</keyword>
<feature type="chain" id="PRO_0000096375" description="Mediator of RNA polymerase II transcription subunit 21">
    <location>
        <begin position="1"/>
        <end position="144"/>
    </location>
</feature>
<feature type="sequence conflict" description="In Ref. 2; AAB06944." evidence="11" ref="2">
    <original>L</original>
    <variation>V</variation>
    <location>
        <position position="104"/>
    </location>
</feature>
<feature type="helix" evidence="12">
    <location>
        <begin position="4"/>
        <end position="28"/>
    </location>
</feature>
<feature type="helix" evidence="12">
    <location>
        <begin position="49"/>
        <end position="75"/>
    </location>
</feature>
<feature type="helix" evidence="12">
    <location>
        <begin position="83"/>
        <end position="132"/>
    </location>
</feature>
<protein>
    <recommendedName>
        <fullName>Mediator of RNA polymerase II transcription subunit 21</fullName>
    </recommendedName>
    <alternativeName>
        <fullName>Mediator complex subunit 21</fullName>
    </alternativeName>
    <alternativeName>
        <fullName>RNA polymerase II holoenzyme component SRB7</fullName>
        <shortName>RNAPII complex component SRB7</shortName>
        <shortName>hSrb7</shortName>
    </alternativeName>
</protein>
<proteinExistence type="evidence at protein level"/>
<comment type="function">
    <text evidence="4 8">Component of the Mediator complex, a coactivator involved in the regulated transcription of nearly all RNA polymerase II-dependent genes. Mediator functions as a bridge to convey information from gene-specific regulatory proteins to the basal RNA polymerase II transcription machinery. Mediator is recruited to promoters by direct interactions with regulatory proteins and serves as a scaffold for the assembly of a functional preinitiation complex with RNA polymerase II and the general transcription factors.</text>
</comment>
<comment type="subunit">
    <text evidence="1 2 3 4 5 6 7 9 10">Interacts with PPARG (By similarity). Component of the Mediator complex, which is composed of MED1, MED4, MED6, MED7, MED8, MED9, MED10, MED11, MED12, MED13, MED13L, MED14, MED15, MED16, MED17, MED18, MED19, MED20, MED21, MED22, MED23, MED24, MED25, MED26, MED27, MED29, MED30, MED31, CCNC, CDK8 and CDC2L6/CDK11. The MED12, MED13, CCNC and CDK8 subunits form a distinct module termed the CDK8 module. Mediator containing the CDK8 module is less active than Mediator lacking this module in supporting transcriptional activation. Individual preparations of the Mediator complex lacking one or more distinct subunits have been variously termed ARC, CRSP, DRIP, PC2, SMCC and TRAP. Interacts with THRA in a ligand-dependent fashion.</text>
</comment>
<comment type="interaction">
    <interactant intactId="EBI-394678">
        <id>Q13503</id>
    </interactant>
    <interactant intactId="EBI-465781">
        <id>Q9UL45</id>
        <label>BLOC1S6</label>
    </interactant>
    <organismsDiffer>false</organismsDiffer>
    <experiments>3</experiments>
</comment>
<comment type="interaction">
    <interactant intactId="EBI-394678">
        <id>Q13503</id>
    </interactant>
    <interactant intactId="EBI-10193358">
        <id>Q96GS4</id>
        <label>BORCS6</label>
    </interactant>
    <organismsDiffer>false</organismsDiffer>
    <experiments>3</experiments>
</comment>
<comment type="interaction">
    <interactant intactId="EBI-394678">
        <id>Q13503</id>
    </interactant>
    <interactant intactId="EBI-740220">
        <id>O14964</id>
        <label>HGS</label>
    </interactant>
    <organismsDiffer>false</organismsDiffer>
    <experiments>3</experiments>
</comment>
<comment type="interaction">
    <interactant intactId="EBI-394678">
        <id>Q13503</id>
    </interactant>
    <interactant intactId="EBI-948266">
        <id>O14901</id>
        <label>KLF11</label>
    </interactant>
    <organismsDiffer>false</organismsDiffer>
    <experiments>3</experiments>
</comment>
<comment type="interaction">
    <interactant intactId="EBI-394678">
        <id>Q13503</id>
    </interactant>
    <interactant intactId="EBI-4314821">
        <id>Q13449</id>
        <label>LSAMP</label>
    </interactant>
    <organismsDiffer>false</organismsDiffer>
    <experiments>3</experiments>
</comment>
<comment type="interaction">
    <interactant intactId="EBI-394678">
        <id>Q13503</id>
    </interactant>
    <interactant intactId="EBI-751857">
        <id>O15481</id>
        <label>MAGEB4</label>
    </interactant>
    <organismsDiffer>false</organismsDiffer>
    <experiments>6</experiments>
</comment>
<comment type="interaction">
    <interactant intactId="EBI-394678">
        <id>Q13503</id>
    </interactant>
    <interactant intactId="EBI-394459">
        <id>Q15648</id>
        <label>MED1</label>
    </interactant>
    <organismsDiffer>false</organismsDiffer>
    <experiments>7</experiments>
</comment>
<comment type="interaction">
    <interactant intactId="EBI-394678">
        <id>Q13503</id>
    </interactant>
    <interactant intactId="EBI-394607">
        <id>Q9NPJ6</id>
        <label>MED4</label>
    </interactant>
    <organismsDiffer>false</organismsDiffer>
    <experiments>11</experiments>
</comment>
<comment type="interaction">
    <interactant intactId="EBI-394678">
        <id>Q13503</id>
    </interactant>
    <interactant intactId="EBI-394632">
        <id>O43513</id>
        <label>MED7</label>
    </interactant>
    <organismsDiffer>false</organismsDiffer>
    <experiments>7</experiments>
</comment>
<comment type="interaction">
    <interactant intactId="EBI-394678">
        <id>Q13503</id>
    </interactant>
    <interactant intactId="EBI-394653">
        <id>Q9NWA0</id>
        <label>MED9</label>
    </interactant>
    <organismsDiffer>false</organismsDiffer>
    <experiments>10</experiments>
</comment>
<comment type="interaction">
    <interactant intactId="EBI-394678">
        <id>Q13503</id>
    </interactant>
    <interactant intactId="EBI-740987">
        <id>Q9NQG6</id>
        <label>MIEF1</label>
    </interactant>
    <organismsDiffer>false</organismsDiffer>
    <experiments>3</experiments>
</comment>
<comment type="interaction">
    <interactant intactId="EBI-394678">
        <id>Q13503</id>
    </interactant>
    <interactant intactId="EBI-2811583">
        <id>Q9BVL2</id>
        <label>NUP58</label>
    </interactant>
    <organismsDiffer>false</organismsDiffer>
    <experiments>3</experiments>
</comment>
<comment type="interaction">
    <interactant intactId="EBI-394678">
        <id>Q13503</id>
    </interactant>
    <interactant intactId="EBI-307497">
        <id>P63208-1</id>
        <label>SKP1</label>
    </interactant>
    <organismsDiffer>false</organismsDiffer>
    <experiments>5</experiments>
</comment>
<comment type="interaction">
    <interactant intactId="EBI-394678">
        <id>Q13503</id>
    </interactant>
    <interactant intactId="EBI-10172867">
        <id>A1L4H1</id>
        <label>SSC5D</label>
    </interactant>
    <organismsDiffer>false</organismsDiffer>
    <experiments>6</experiments>
</comment>
<comment type="interaction">
    <interactant intactId="EBI-394678">
        <id>Q13503</id>
    </interactant>
    <interactant intactId="EBI-2341648">
        <id>Q6ZMU5</id>
        <label>TRIM72</label>
    </interactant>
    <organismsDiffer>false</organismsDiffer>
    <experiments>3</experiments>
</comment>
<comment type="interaction">
    <interactant intactId="EBI-394678">
        <id>Q13503</id>
    </interactant>
    <interactant intactId="EBI-625509">
        <id>Q8N720</id>
        <label>ZNF655</label>
    </interactant>
    <organismsDiffer>false</organismsDiffer>
    <experiments>3</experiments>
</comment>
<comment type="subcellular location">
    <subcellularLocation>
        <location evidence="11">Nucleus</location>
    </subcellularLocation>
</comment>
<comment type="similarity">
    <text evidence="11">Belongs to the Mediator complex subunit 21 family.</text>
</comment>
<dbReference type="EMBL" id="U46837">
    <property type="protein sequence ID" value="AAA98511.1"/>
    <property type="molecule type" value="mRNA"/>
</dbReference>
<dbReference type="EMBL" id="U52960">
    <property type="protein sequence ID" value="AAB06944.1"/>
    <property type="molecule type" value="mRNA"/>
</dbReference>
<dbReference type="EMBL" id="CR456999">
    <property type="protein sequence ID" value="CAG33280.1"/>
    <property type="molecule type" value="mRNA"/>
</dbReference>
<dbReference type="EMBL" id="AK311838">
    <property type="protein sequence ID" value="BAG34780.1"/>
    <property type="molecule type" value="mRNA"/>
</dbReference>
<dbReference type="EMBL" id="CH471094">
    <property type="protein sequence ID" value="EAW96545.1"/>
    <property type="molecule type" value="Genomic_DNA"/>
</dbReference>
<dbReference type="EMBL" id="BC008380">
    <property type="protein sequence ID" value="AAH08380.1"/>
    <property type="molecule type" value="mRNA"/>
</dbReference>
<dbReference type="CCDS" id="CCDS8711.1"/>
<dbReference type="PIR" id="S68454">
    <property type="entry name" value="S68454"/>
</dbReference>
<dbReference type="RefSeq" id="NP_004255.2">
    <property type="nucleotide sequence ID" value="NM_004264.4"/>
</dbReference>
<dbReference type="RefSeq" id="XP_047285860.1">
    <property type="nucleotide sequence ID" value="XM_047429904.1"/>
</dbReference>
<dbReference type="RefSeq" id="XP_047285861.1">
    <property type="nucleotide sequence ID" value="XM_047429905.1"/>
</dbReference>
<dbReference type="RefSeq" id="XP_047285862.1">
    <property type="nucleotide sequence ID" value="XM_047429906.1"/>
</dbReference>
<dbReference type="RefSeq" id="XP_047285863.1">
    <property type="nucleotide sequence ID" value="XM_047429907.1"/>
</dbReference>
<dbReference type="PDB" id="7EMF">
    <property type="method" value="EM"/>
    <property type="resolution" value="3.50 A"/>
    <property type="chains" value="U=1-144"/>
</dbReference>
<dbReference type="PDB" id="7ENA">
    <property type="method" value="EM"/>
    <property type="resolution" value="4.07 A"/>
    <property type="chains" value="u=1-144"/>
</dbReference>
<dbReference type="PDB" id="7ENC">
    <property type="method" value="EM"/>
    <property type="resolution" value="4.13 A"/>
    <property type="chains" value="u=1-144"/>
</dbReference>
<dbReference type="PDB" id="7ENJ">
    <property type="method" value="EM"/>
    <property type="resolution" value="4.40 A"/>
    <property type="chains" value="U=1-144"/>
</dbReference>
<dbReference type="PDB" id="7LBM">
    <property type="method" value="EM"/>
    <property type="resolution" value="4.80 A"/>
    <property type="chains" value="x=1-144"/>
</dbReference>
<dbReference type="PDB" id="7NVR">
    <property type="method" value="EM"/>
    <property type="resolution" value="4.50 A"/>
    <property type="chains" value="n=1-144"/>
</dbReference>
<dbReference type="PDB" id="8GXQ">
    <property type="method" value="EM"/>
    <property type="resolution" value="5.04 A"/>
    <property type="chains" value="u=1-144"/>
</dbReference>
<dbReference type="PDB" id="8GXS">
    <property type="method" value="EM"/>
    <property type="resolution" value="4.16 A"/>
    <property type="chains" value="u=1-144"/>
</dbReference>
<dbReference type="PDB" id="8T9D">
    <property type="method" value="EM"/>
    <property type="resolution" value="4.66 A"/>
    <property type="chains" value="P=1-144"/>
</dbReference>
<dbReference type="PDB" id="8TQW">
    <property type="method" value="EM"/>
    <property type="resolution" value="8.20 A"/>
    <property type="chains" value="U=1-144"/>
</dbReference>
<dbReference type="PDB" id="8TRH">
    <property type="method" value="EM"/>
    <property type="resolution" value="3.70 A"/>
    <property type="chains" value="U=1-144"/>
</dbReference>
<dbReference type="PDBsum" id="7EMF"/>
<dbReference type="PDBsum" id="7ENA"/>
<dbReference type="PDBsum" id="7ENC"/>
<dbReference type="PDBsum" id="7ENJ"/>
<dbReference type="PDBsum" id="7LBM"/>
<dbReference type="PDBsum" id="7NVR"/>
<dbReference type="PDBsum" id="8GXQ"/>
<dbReference type="PDBsum" id="8GXS"/>
<dbReference type="PDBsum" id="8T9D"/>
<dbReference type="PDBsum" id="8TQW"/>
<dbReference type="PDBsum" id="8TRH"/>
<dbReference type="EMDB" id="EMD-12610"/>
<dbReference type="EMDB" id="EMD-23255"/>
<dbReference type="EMDB" id="EMD-31191"/>
<dbReference type="EMDB" id="EMD-31204"/>
<dbReference type="EMDB" id="EMD-31207"/>
<dbReference type="EMDB" id="EMD-31211"/>
<dbReference type="EMDB" id="EMD-34359"/>
<dbReference type="EMDB" id="EMD-34360"/>
<dbReference type="EMDB" id="EMD-41107"/>
<dbReference type="EMDB" id="EMD-41565"/>
<dbReference type="EMDB" id="EMD-41580"/>
<dbReference type="SMR" id="Q13503"/>
<dbReference type="BioGRID" id="114807">
    <property type="interactions" value="150"/>
</dbReference>
<dbReference type="ComplexPortal" id="CPX-3227">
    <property type="entry name" value="Core mediator complex"/>
</dbReference>
<dbReference type="CORUM" id="Q13503"/>
<dbReference type="DIP" id="DIP-31471N"/>
<dbReference type="FunCoup" id="Q13503">
    <property type="interactions" value="2227"/>
</dbReference>
<dbReference type="IntAct" id="Q13503">
    <property type="interactions" value="125"/>
</dbReference>
<dbReference type="MINT" id="Q13503"/>
<dbReference type="STRING" id="9606.ENSP00000282892"/>
<dbReference type="GlyGen" id="Q13503">
    <property type="glycosylation" value="1 site, 1 O-linked glycan (1 site)"/>
</dbReference>
<dbReference type="iPTMnet" id="Q13503"/>
<dbReference type="PhosphoSitePlus" id="Q13503"/>
<dbReference type="BioMuta" id="MED21"/>
<dbReference type="DMDM" id="7531204"/>
<dbReference type="jPOST" id="Q13503"/>
<dbReference type="MassIVE" id="Q13503"/>
<dbReference type="PaxDb" id="9606-ENSP00000282892"/>
<dbReference type="PeptideAtlas" id="Q13503"/>
<dbReference type="ProteomicsDB" id="59498"/>
<dbReference type="Pumba" id="Q13503"/>
<dbReference type="TopDownProteomics" id="Q13503"/>
<dbReference type="Antibodypedia" id="1803">
    <property type="antibodies" value="173 antibodies from 26 providers"/>
</dbReference>
<dbReference type="DNASU" id="9412"/>
<dbReference type="Ensembl" id="ENST00000282892.4">
    <property type="protein sequence ID" value="ENSP00000282892.3"/>
    <property type="gene ID" value="ENSG00000152944.9"/>
</dbReference>
<dbReference type="GeneID" id="9412"/>
<dbReference type="KEGG" id="hsa:9412"/>
<dbReference type="MANE-Select" id="ENST00000282892.4">
    <property type="protein sequence ID" value="ENSP00000282892.3"/>
    <property type="RefSeq nucleotide sequence ID" value="NM_004264.5"/>
    <property type="RefSeq protein sequence ID" value="NP_004255.2"/>
</dbReference>
<dbReference type="UCSC" id="uc001rhp.3">
    <property type="organism name" value="human"/>
</dbReference>
<dbReference type="AGR" id="HGNC:11473"/>
<dbReference type="CTD" id="9412"/>
<dbReference type="DisGeNET" id="9412"/>
<dbReference type="GeneCards" id="MED21"/>
<dbReference type="HGNC" id="HGNC:11473">
    <property type="gene designation" value="MED21"/>
</dbReference>
<dbReference type="HPA" id="ENSG00000152944">
    <property type="expression patterns" value="Low tissue specificity"/>
</dbReference>
<dbReference type="MIM" id="603800">
    <property type="type" value="gene"/>
</dbReference>
<dbReference type="neXtProt" id="NX_Q13503"/>
<dbReference type="OpenTargets" id="ENSG00000152944"/>
<dbReference type="PharmGKB" id="PA162395485"/>
<dbReference type="VEuPathDB" id="HostDB:ENSG00000152944"/>
<dbReference type="eggNOG" id="KOG1510">
    <property type="taxonomic scope" value="Eukaryota"/>
</dbReference>
<dbReference type="GeneTree" id="ENSGT00390000014557"/>
<dbReference type="HOGENOM" id="CLU_126757_0_0_1"/>
<dbReference type="InParanoid" id="Q13503"/>
<dbReference type="OMA" id="DSFPIEA"/>
<dbReference type="OrthoDB" id="526653at2759"/>
<dbReference type="PAN-GO" id="Q13503">
    <property type="GO annotations" value="3 GO annotations based on evolutionary models"/>
</dbReference>
<dbReference type="PhylomeDB" id="Q13503"/>
<dbReference type="PathwayCommons" id="Q13503"/>
<dbReference type="Reactome" id="R-HSA-1989781">
    <property type="pathway name" value="PPARA activates gene expression"/>
</dbReference>
<dbReference type="Reactome" id="R-HSA-381340">
    <property type="pathway name" value="Transcriptional regulation of white adipocyte differentiation"/>
</dbReference>
<dbReference type="Reactome" id="R-HSA-9833110">
    <property type="pathway name" value="RSV-host interactions"/>
</dbReference>
<dbReference type="SignaLink" id="Q13503"/>
<dbReference type="SIGNOR" id="Q13503"/>
<dbReference type="BioGRID-ORCS" id="9412">
    <property type="hits" value="668 hits in 1175 CRISPR screens"/>
</dbReference>
<dbReference type="CD-CODE" id="91857CE7">
    <property type="entry name" value="Nucleolus"/>
</dbReference>
<dbReference type="ChiTaRS" id="MED21">
    <property type="organism name" value="human"/>
</dbReference>
<dbReference type="GeneWiki" id="MED21"/>
<dbReference type="GenomeRNAi" id="9412"/>
<dbReference type="Pharos" id="Q13503">
    <property type="development level" value="Tbio"/>
</dbReference>
<dbReference type="PRO" id="PR:Q13503"/>
<dbReference type="Proteomes" id="UP000005640">
    <property type="component" value="Chromosome 12"/>
</dbReference>
<dbReference type="RNAct" id="Q13503">
    <property type="molecule type" value="protein"/>
</dbReference>
<dbReference type="Bgee" id="ENSG00000152944">
    <property type="expression patterns" value="Expressed in secondary oocyte and 207 other cell types or tissues"/>
</dbReference>
<dbReference type="ExpressionAtlas" id="Q13503">
    <property type="expression patterns" value="baseline and differential"/>
</dbReference>
<dbReference type="GO" id="GO:0070847">
    <property type="term" value="C:core mediator complex"/>
    <property type="evidence" value="ECO:0000353"/>
    <property type="project" value="ComplexPortal"/>
</dbReference>
<dbReference type="GO" id="GO:0016592">
    <property type="term" value="C:mediator complex"/>
    <property type="evidence" value="ECO:0000314"/>
    <property type="project" value="MGI"/>
</dbReference>
<dbReference type="GO" id="GO:0005654">
    <property type="term" value="C:nucleoplasm"/>
    <property type="evidence" value="ECO:0000304"/>
    <property type="project" value="Reactome"/>
</dbReference>
<dbReference type="GO" id="GO:0005634">
    <property type="term" value="C:nucleus"/>
    <property type="evidence" value="ECO:0000314"/>
    <property type="project" value="ComplexPortal"/>
</dbReference>
<dbReference type="GO" id="GO:0000151">
    <property type="term" value="C:ubiquitin ligase complex"/>
    <property type="evidence" value="ECO:0007669"/>
    <property type="project" value="Ensembl"/>
</dbReference>
<dbReference type="GO" id="GO:0003899">
    <property type="term" value="F:DNA-directed RNA polymerase activity"/>
    <property type="evidence" value="ECO:0000304"/>
    <property type="project" value="ProtInc"/>
</dbReference>
<dbReference type="GO" id="GO:0003713">
    <property type="term" value="F:transcription coactivator activity"/>
    <property type="evidence" value="ECO:0000314"/>
    <property type="project" value="MGI"/>
</dbReference>
<dbReference type="GO" id="GO:0003712">
    <property type="term" value="F:transcription coregulator activity"/>
    <property type="evidence" value="ECO:0000318"/>
    <property type="project" value="GO_Central"/>
</dbReference>
<dbReference type="GO" id="GO:0061630">
    <property type="term" value="F:ubiquitin protein ligase activity"/>
    <property type="evidence" value="ECO:0007669"/>
    <property type="project" value="Ensembl"/>
</dbReference>
<dbReference type="GO" id="GO:0001824">
    <property type="term" value="P:blastocyst development"/>
    <property type="evidence" value="ECO:0007669"/>
    <property type="project" value="Ensembl"/>
</dbReference>
<dbReference type="GO" id="GO:0045944">
    <property type="term" value="P:positive regulation of transcription by RNA polymerase II"/>
    <property type="evidence" value="ECO:0000314"/>
    <property type="project" value="MGI"/>
</dbReference>
<dbReference type="GO" id="GO:0032968">
    <property type="term" value="P:positive regulation of transcription elongation by RNA polymerase II"/>
    <property type="evidence" value="ECO:0000303"/>
    <property type="project" value="ComplexPortal"/>
</dbReference>
<dbReference type="GO" id="GO:0060261">
    <property type="term" value="P:positive regulation of transcription initiation by RNA polymerase II"/>
    <property type="evidence" value="ECO:0000303"/>
    <property type="project" value="ComplexPortal"/>
</dbReference>
<dbReference type="GO" id="GO:0016567">
    <property type="term" value="P:protein ubiquitination"/>
    <property type="evidence" value="ECO:0007669"/>
    <property type="project" value="Ensembl"/>
</dbReference>
<dbReference type="GO" id="GO:0006357">
    <property type="term" value="P:regulation of transcription by RNA polymerase II"/>
    <property type="evidence" value="ECO:0000318"/>
    <property type="project" value="GO_Central"/>
</dbReference>
<dbReference type="GO" id="GO:0051123">
    <property type="term" value="P:RNA polymerase II preinitiation complex assembly"/>
    <property type="evidence" value="ECO:0000303"/>
    <property type="project" value="ComplexPortal"/>
</dbReference>
<dbReference type="GO" id="GO:0035019">
    <property type="term" value="P:somatic stem cell population maintenance"/>
    <property type="evidence" value="ECO:0007669"/>
    <property type="project" value="Ensembl"/>
</dbReference>
<dbReference type="Gene3D" id="6.10.280.10">
    <property type="entry name" value="Mediator complex, subunit Med21"/>
    <property type="match status" value="1"/>
</dbReference>
<dbReference type="InterPro" id="IPR037212">
    <property type="entry name" value="Med7/Med21-like"/>
</dbReference>
<dbReference type="InterPro" id="IPR021384">
    <property type="entry name" value="Mediator_Med21"/>
</dbReference>
<dbReference type="PANTHER" id="PTHR13381:SF0">
    <property type="entry name" value="MEDIATOR OF RNA POLYMERASE II TRANSCRIPTION SUBUNIT 21"/>
    <property type="match status" value="1"/>
</dbReference>
<dbReference type="PANTHER" id="PTHR13381">
    <property type="entry name" value="RNA POLYMERASE II HOLOENZYME COMPONENT SRB7"/>
    <property type="match status" value="1"/>
</dbReference>
<dbReference type="Pfam" id="PF11221">
    <property type="entry name" value="Med21"/>
    <property type="match status" value="1"/>
</dbReference>
<dbReference type="SUPFAM" id="SSF140718">
    <property type="entry name" value="Mediator hinge subcomplex-like"/>
    <property type="match status" value="1"/>
</dbReference>
<organism>
    <name type="scientific">Homo sapiens</name>
    <name type="common">Human</name>
    <dbReference type="NCBI Taxonomy" id="9606"/>
    <lineage>
        <taxon>Eukaryota</taxon>
        <taxon>Metazoa</taxon>
        <taxon>Chordata</taxon>
        <taxon>Craniata</taxon>
        <taxon>Vertebrata</taxon>
        <taxon>Euteleostomi</taxon>
        <taxon>Mammalia</taxon>
        <taxon>Eutheria</taxon>
        <taxon>Euarchontoglires</taxon>
        <taxon>Primates</taxon>
        <taxon>Haplorrhini</taxon>
        <taxon>Catarrhini</taxon>
        <taxon>Hominidae</taxon>
        <taxon>Homo</taxon>
    </lineage>
</organism>
<evidence type="ECO:0000250" key="1"/>
<evidence type="ECO:0000269" key="2">
    <source>
    </source>
</evidence>
<evidence type="ECO:0000269" key="3">
    <source>
    </source>
</evidence>
<evidence type="ECO:0000269" key="4">
    <source>
    </source>
</evidence>
<evidence type="ECO:0000269" key="5">
    <source>
    </source>
</evidence>
<evidence type="ECO:0000269" key="6">
    <source>
    </source>
</evidence>
<evidence type="ECO:0000269" key="7">
    <source>
    </source>
</evidence>
<evidence type="ECO:0000269" key="8">
    <source>
    </source>
</evidence>
<evidence type="ECO:0000269" key="9">
    <source>
    </source>
</evidence>
<evidence type="ECO:0000269" key="10">
    <source>
    </source>
</evidence>
<evidence type="ECO:0000305" key="11"/>
<evidence type="ECO:0007829" key="12">
    <source>
        <dbReference type="PDB" id="7EMF"/>
    </source>
</evidence>
<gene>
    <name type="primary">MED21</name>
    <name type="synonym">SRB7</name>
    <name type="synonym">SURB7</name>
</gene>